<proteinExistence type="inferred from homology"/>
<organism>
    <name type="scientific">Methylobacterium nodulans (strain LMG 21967 / CNCM I-2342 / ORS 2060)</name>
    <dbReference type="NCBI Taxonomy" id="460265"/>
    <lineage>
        <taxon>Bacteria</taxon>
        <taxon>Pseudomonadati</taxon>
        <taxon>Pseudomonadota</taxon>
        <taxon>Alphaproteobacteria</taxon>
        <taxon>Hyphomicrobiales</taxon>
        <taxon>Methylobacteriaceae</taxon>
        <taxon>Methylobacterium</taxon>
    </lineage>
</organism>
<sequence length="304" mass="32448">MSQSDADALPNVHVRAEVLVQALPHMQRYDEEIVVIKYGGHAMGDRAAAEDFAEDIVLLEQSGLKPVIVHGGGPQIGRMLDRLGIKSEFREGLRVTDEATVEVVEMVLAGSINKQIVGWISAEGGKAIGLCGKDGNMVQARRATRTVVDPDSNIERHVDLGLVGEPERVNRAVLDAVLKAELIPVLAPVAVGSDGQTYNVNADTFAGAIAGALRAKRLLLLTDVPGVLDKDKKLIPELSIEDCRRLIADGTITGGMIPKIETCIYAIEQGVEAVVILDGKVPHAVLLELFTDYGAGTLIRRSGA</sequence>
<comment type="function">
    <text evidence="1">Catalyzes the ATP-dependent phosphorylation of N-acetyl-L-glutamate.</text>
</comment>
<comment type="catalytic activity">
    <reaction evidence="1">
        <text>N-acetyl-L-glutamate + ATP = N-acetyl-L-glutamyl 5-phosphate + ADP</text>
        <dbReference type="Rhea" id="RHEA:14629"/>
        <dbReference type="ChEBI" id="CHEBI:30616"/>
        <dbReference type="ChEBI" id="CHEBI:44337"/>
        <dbReference type="ChEBI" id="CHEBI:57936"/>
        <dbReference type="ChEBI" id="CHEBI:456216"/>
        <dbReference type="EC" id="2.7.2.8"/>
    </reaction>
</comment>
<comment type="pathway">
    <text evidence="1">Amino-acid biosynthesis; L-arginine biosynthesis; N(2)-acetyl-L-ornithine from L-glutamate: step 2/4.</text>
</comment>
<comment type="subcellular location">
    <subcellularLocation>
        <location evidence="1">Cytoplasm</location>
    </subcellularLocation>
</comment>
<comment type="similarity">
    <text evidence="1">Belongs to the acetylglutamate kinase family. ArgB subfamily.</text>
</comment>
<gene>
    <name evidence="1" type="primary">argB</name>
    <name type="ordered locus">Mnod_1384</name>
</gene>
<evidence type="ECO:0000255" key="1">
    <source>
        <dbReference type="HAMAP-Rule" id="MF_00082"/>
    </source>
</evidence>
<name>ARGB_METNO</name>
<feature type="chain" id="PRO_1000118354" description="Acetylglutamate kinase">
    <location>
        <begin position="1"/>
        <end position="304"/>
    </location>
</feature>
<feature type="binding site" evidence="1">
    <location>
        <begin position="72"/>
        <end position="73"/>
    </location>
    <ligand>
        <name>substrate</name>
    </ligand>
</feature>
<feature type="binding site" evidence="1">
    <location>
        <position position="94"/>
    </location>
    <ligand>
        <name>substrate</name>
    </ligand>
</feature>
<feature type="binding site" evidence="1">
    <location>
        <position position="199"/>
    </location>
    <ligand>
        <name>substrate</name>
    </ligand>
</feature>
<feature type="site" description="Transition state stabilizer" evidence="1">
    <location>
        <position position="37"/>
    </location>
</feature>
<feature type="site" description="Transition state stabilizer" evidence="1">
    <location>
        <position position="259"/>
    </location>
</feature>
<accession>B8IM39</accession>
<dbReference type="EC" id="2.7.2.8" evidence="1"/>
<dbReference type="EMBL" id="CP001349">
    <property type="protein sequence ID" value="ACL56383.1"/>
    <property type="molecule type" value="Genomic_DNA"/>
</dbReference>
<dbReference type="RefSeq" id="WP_015928079.1">
    <property type="nucleotide sequence ID" value="NC_011894.1"/>
</dbReference>
<dbReference type="SMR" id="B8IM39"/>
<dbReference type="STRING" id="460265.Mnod_1384"/>
<dbReference type="KEGG" id="mno:Mnod_1384"/>
<dbReference type="eggNOG" id="COG0548">
    <property type="taxonomic scope" value="Bacteria"/>
</dbReference>
<dbReference type="HOGENOM" id="CLU_053680_0_0_5"/>
<dbReference type="OrthoDB" id="9803155at2"/>
<dbReference type="UniPathway" id="UPA00068">
    <property type="reaction ID" value="UER00107"/>
</dbReference>
<dbReference type="Proteomes" id="UP000008207">
    <property type="component" value="Chromosome"/>
</dbReference>
<dbReference type="GO" id="GO:0005737">
    <property type="term" value="C:cytoplasm"/>
    <property type="evidence" value="ECO:0007669"/>
    <property type="project" value="UniProtKB-SubCell"/>
</dbReference>
<dbReference type="GO" id="GO:0003991">
    <property type="term" value="F:acetylglutamate kinase activity"/>
    <property type="evidence" value="ECO:0007669"/>
    <property type="project" value="UniProtKB-UniRule"/>
</dbReference>
<dbReference type="GO" id="GO:0005524">
    <property type="term" value="F:ATP binding"/>
    <property type="evidence" value="ECO:0007669"/>
    <property type="project" value="UniProtKB-UniRule"/>
</dbReference>
<dbReference type="GO" id="GO:0042450">
    <property type="term" value="P:arginine biosynthetic process via ornithine"/>
    <property type="evidence" value="ECO:0007669"/>
    <property type="project" value="UniProtKB-UniRule"/>
</dbReference>
<dbReference type="GO" id="GO:0006526">
    <property type="term" value="P:L-arginine biosynthetic process"/>
    <property type="evidence" value="ECO:0007669"/>
    <property type="project" value="UniProtKB-UniPathway"/>
</dbReference>
<dbReference type="CDD" id="cd04250">
    <property type="entry name" value="AAK_NAGK-C"/>
    <property type="match status" value="1"/>
</dbReference>
<dbReference type="FunFam" id="3.40.1160.10:FF:000004">
    <property type="entry name" value="Acetylglutamate kinase"/>
    <property type="match status" value="1"/>
</dbReference>
<dbReference type="Gene3D" id="3.40.1160.10">
    <property type="entry name" value="Acetylglutamate kinase-like"/>
    <property type="match status" value="1"/>
</dbReference>
<dbReference type="HAMAP" id="MF_00082">
    <property type="entry name" value="ArgB"/>
    <property type="match status" value="1"/>
</dbReference>
<dbReference type="InterPro" id="IPR036393">
    <property type="entry name" value="AceGlu_kinase-like_sf"/>
</dbReference>
<dbReference type="InterPro" id="IPR004662">
    <property type="entry name" value="AcgluKinase_fam"/>
</dbReference>
<dbReference type="InterPro" id="IPR037528">
    <property type="entry name" value="ArgB"/>
</dbReference>
<dbReference type="InterPro" id="IPR001048">
    <property type="entry name" value="Asp/Glu/Uridylate_kinase"/>
</dbReference>
<dbReference type="InterPro" id="IPR001057">
    <property type="entry name" value="Glu/AcGlu_kinase"/>
</dbReference>
<dbReference type="InterPro" id="IPR041727">
    <property type="entry name" value="NAGK-C"/>
</dbReference>
<dbReference type="NCBIfam" id="TIGR00761">
    <property type="entry name" value="argB"/>
    <property type="match status" value="1"/>
</dbReference>
<dbReference type="PANTHER" id="PTHR23342">
    <property type="entry name" value="N-ACETYLGLUTAMATE SYNTHASE"/>
    <property type="match status" value="1"/>
</dbReference>
<dbReference type="PANTHER" id="PTHR23342:SF0">
    <property type="entry name" value="N-ACETYLGLUTAMATE SYNTHASE, MITOCHONDRIAL"/>
    <property type="match status" value="1"/>
</dbReference>
<dbReference type="Pfam" id="PF00696">
    <property type="entry name" value="AA_kinase"/>
    <property type="match status" value="1"/>
</dbReference>
<dbReference type="PIRSF" id="PIRSF000728">
    <property type="entry name" value="NAGK"/>
    <property type="match status" value="1"/>
</dbReference>
<dbReference type="PRINTS" id="PR00474">
    <property type="entry name" value="GLU5KINASE"/>
</dbReference>
<dbReference type="SUPFAM" id="SSF53633">
    <property type="entry name" value="Carbamate kinase-like"/>
    <property type="match status" value="1"/>
</dbReference>
<reference key="1">
    <citation type="submission" date="2009-01" db="EMBL/GenBank/DDBJ databases">
        <title>Complete sequence of chromosome of Methylobacterium nodulans ORS 2060.</title>
        <authorList>
            <consortium name="US DOE Joint Genome Institute"/>
            <person name="Lucas S."/>
            <person name="Copeland A."/>
            <person name="Lapidus A."/>
            <person name="Glavina del Rio T."/>
            <person name="Dalin E."/>
            <person name="Tice H."/>
            <person name="Bruce D."/>
            <person name="Goodwin L."/>
            <person name="Pitluck S."/>
            <person name="Sims D."/>
            <person name="Brettin T."/>
            <person name="Detter J.C."/>
            <person name="Han C."/>
            <person name="Larimer F."/>
            <person name="Land M."/>
            <person name="Hauser L."/>
            <person name="Kyrpides N."/>
            <person name="Ivanova N."/>
            <person name="Marx C.J."/>
            <person name="Richardson P."/>
        </authorList>
    </citation>
    <scope>NUCLEOTIDE SEQUENCE [LARGE SCALE GENOMIC DNA]</scope>
    <source>
        <strain>LMG 21967 / CNCM I-2342 / ORS 2060</strain>
    </source>
</reference>
<protein>
    <recommendedName>
        <fullName evidence="1">Acetylglutamate kinase</fullName>
        <ecNumber evidence="1">2.7.2.8</ecNumber>
    </recommendedName>
    <alternativeName>
        <fullName evidence="1">N-acetyl-L-glutamate 5-phosphotransferase</fullName>
    </alternativeName>
    <alternativeName>
        <fullName evidence="1">NAG kinase</fullName>
        <shortName evidence="1">NAGK</shortName>
    </alternativeName>
</protein>
<keyword id="KW-0028">Amino-acid biosynthesis</keyword>
<keyword id="KW-0055">Arginine biosynthesis</keyword>
<keyword id="KW-0067">ATP-binding</keyword>
<keyword id="KW-0963">Cytoplasm</keyword>
<keyword id="KW-0418">Kinase</keyword>
<keyword id="KW-0547">Nucleotide-binding</keyword>
<keyword id="KW-1185">Reference proteome</keyword>
<keyword id="KW-0808">Transferase</keyword>